<organism>
    <name type="scientific">Streptococcus pneumoniae (strain 70585)</name>
    <dbReference type="NCBI Taxonomy" id="488221"/>
    <lineage>
        <taxon>Bacteria</taxon>
        <taxon>Bacillati</taxon>
        <taxon>Bacillota</taxon>
        <taxon>Bacilli</taxon>
        <taxon>Lactobacillales</taxon>
        <taxon>Streptococcaceae</taxon>
        <taxon>Streptococcus</taxon>
    </lineage>
</organism>
<name>TRPA_STRP7</name>
<accession>C1C965</accession>
<proteinExistence type="inferred from homology"/>
<feature type="chain" id="PRO_1000198725" description="Tryptophan synthase alpha chain">
    <location>
        <begin position="1"/>
        <end position="258"/>
    </location>
</feature>
<feature type="active site" description="Proton acceptor" evidence="1">
    <location>
        <position position="52"/>
    </location>
</feature>
<feature type="active site" description="Proton acceptor" evidence="1">
    <location>
        <position position="63"/>
    </location>
</feature>
<dbReference type="EC" id="4.2.1.20" evidence="1"/>
<dbReference type="EMBL" id="CP000918">
    <property type="protein sequence ID" value="ACO15890.1"/>
    <property type="molecule type" value="Genomic_DNA"/>
</dbReference>
<dbReference type="RefSeq" id="WP_001126998.1">
    <property type="nucleotide sequence ID" value="NC_012468.1"/>
</dbReference>
<dbReference type="SMR" id="C1C965"/>
<dbReference type="KEGG" id="snm:SP70585_1872"/>
<dbReference type="HOGENOM" id="CLU_016734_0_0_9"/>
<dbReference type="UniPathway" id="UPA00035">
    <property type="reaction ID" value="UER00044"/>
</dbReference>
<dbReference type="Proteomes" id="UP000002211">
    <property type="component" value="Chromosome"/>
</dbReference>
<dbReference type="GO" id="GO:0005829">
    <property type="term" value="C:cytosol"/>
    <property type="evidence" value="ECO:0007669"/>
    <property type="project" value="TreeGrafter"/>
</dbReference>
<dbReference type="GO" id="GO:0004834">
    <property type="term" value="F:tryptophan synthase activity"/>
    <property type="evidence" value="ECO:0007669"/>
    <property type="project" value="UniProtKB-UniRule"/>
</dbReference>
<dbReference type="CDD" id="cd04724">
    <property type="entry name" value="Tryptophan_synthase_alpha"/>
    <property type="match status" value="1"/>
</dbReference>
<dbReference type="Gene3D" id="3.20.20.70">
    <property type="entry name" value="Aldolase class I"/>
    <property type="match status" value="1"/>
</dbReference>
<dbReference type="HAMAP" id="MF_00131">
    <property type="entry name" value="Trp_synth_alpha"/>
    <property type="match status" value="1"/>
</dbReference>
<dbReference type="InterPro" id="IPR013785">
    <property type="entry name" value="Aldolase_TIM"/>
</dbReference>
<dbReference type="InterPro" id="IPR011060">
    <property type="entry name" value="RibuloseP-bd_barrel"/>
</dbReference>
<dbReference type="InterPro" id="IPR018204">
    <property type="entry name" value="Trp_synthase_alpha_AS"/>
</dbReference>
<dbReference type="InterPro" id="IPR002028">
    <property type="entry name" value="Trp_synthase_suA"/>
</dbReference>
<dbReference type="NCBIfam" id="TIGR00262">
    <property type="entry name" value="trpA"/>
    <property type="match status" value="1"/>
</dbReference>
<dbReference type="PANTHER" id="PTHR43406:SF1">
    <property type="entry name" value="TRYPTOPHAN SYNTHASE ALPHA CHAIN, CHLOROPLASTIC"/>
    <property type="match status" value="1"/>
</dbReference>
<dbReference type="PANTHER" id="PTHR43406">
    <property type="entry name" value="TRYPTOPHAN SYNTHASE, ALPHA CHAIN"/>
    <property type="match status" value="1"/>
</dbReference>
<dbReference type="Pfam" id="PF00290">
    <property type="entry name" value="Trp_syntA"/>
    <property type="match status" value="1"/>
</dbReference>
<dbReference type="SUPFAM" id="SSF51366">
    <property type="entry name" value="Ribulose-phoshate binding barrel"/>
    <property type="match status" value="1"/>
</dbReference>
<dbReference type="PROSITE" id="PS00167">
    <property type="entry name" value="TRP_SYNTHASE_ALPHA"/>
    <property type="match status" value="1"/>
</dbReference>
<evidence type="ECO:0000255" key="1">
    <source>
        <dbReference type="HAMAP-Rule" id="MF_00131"/>
    </source>
</evidence>
<gene>
    <name evidence="1" type="primary">trpA</name>
    <name type="ordered locus">SP70585_1872</name>
</gene>
<reference key="1">
    <citation type="journal article" date="2010" name="Genome Biol.">
        <title>Structure and dynamics of the pan-genome of Streptococcus pneumoniae and closely related species.</title>
        <authorList>
            <person name="Donati C."/>
            <person name="Hiller N.L."/>
            <person name="Tettelin H."/>
            <person name="Muzzi A."/>
            <person name="Croucher N.J."/>
            <person name="Angiuoli S.V."/>
            <person name="Oggioni M."/>
            <person name="Dunning Hotopp J.C."/>
            <person name="Hu F.Z."/>
            <person name="Riley D.R."/>
            <person name="Covacci A."/>
            <person name="Mitchell T.J."/>
            <person name="Bentley S.D."/>
            <person name="Kilian M."/>
            <person name="Ehrlich G.D."/>
            <person name="Rappuoli R."/>
            <person name="Moxon E.R."/>
            <person name="Masignani V."/>
        </authorList>
    </citation>
    <scope>NUCLEOTIDE SEQUENCE [LARGE SCALE GENOMIC DNA]</scope>
    <source>
        <strain>70585</strain>
    </source>
</reference>
<protein>
    <recommendedName>
        <fullName evidence="1">Tryptophan synthase alpha chain</fullName>
        <ecNumber evidence="1">4.2.1.20</ecNumber>
    </recommendedName>
</protein>
<keyword id="KW-0028">Amino-acid biosynthesis</keyword>
<keyword id="KW-0057">Aromatic amino acid biosynthesis</keyword>
<keyword id="KW-0456">Lyase</keyword>
<keyword id="KW-0822">Tryptophan biosynthesis</keyword>
<sequence length="258" mass="27711">MPKTLTEKLNAIKAAGKGIFVPYIMAGDHEKGLDGLAETIHFLEDLGVSAIEVGIPFSDPVADGPVIEEAGLRSLAHGTSTQALVETLKTIETEIPLVIMTYFNPLFQYGVENFVKDLADTAVKGLIIPDLPHEHANFVEPFLANTDIALIPLVSLTTGIERQKELIEGAEGFIYAVAINGVTGKSGNYRADLDKHLAQLHQVADIPVLTGFGVSSQADLERFNAVSDGVIVGSKIVKALHQGEPIQDFIKQAVAYQK</sequence>
<comment type="function">
    <text evidence="1">The alpha subunit is responsible for the aldol cleavage of indoleglycerol phosphate to indole and glyceraldehyde 3-phosphate.</text>
</comment>
<comment type="catalytic activity">
    <reaction evidence="1">
        <text>(1S,2R)-1-C-(indol-3-yl)glycerol 3-phosphate + L-serine = D-glyceraldehyde 3-phosphate + L-tryptophan + H2O</text>
        <dbReference type="Rhea" id="RHEA:10532"/>
        <dbReference type="ChEBI" id="CHEBI:15377"/>
        <dbReference type="ChEBI" id="CHEBI:33384"/>
        <dbReference type="ChEBI" id="CHEBI:57912"/>
        <dbReference type="ChEBI" id="CHEBI:58866"/>
        <dbReference type="ChEBI" id="CHEBI:59776"/>
        <dbReference type="EC" id="4.2.1.20"/>
    </reaction>
</comment>
<comment type="pathway">
    <text evidence="1">Amino-acid biosynthesis; L-tryptophan biosynthesis; L-tryptophan from chorismate: step 5/5.</text>
</comment>
<comment type="subunit">
    <text evidence="1">Tetramer of two alpha and two beta chains.</text>
</comment>
<comment type="similarity">
    <text evidence="1">Belongs to the TrpA family.</text>
</comment>